<comment type="subcellular location">
    <subcellularLocation>
        <location evidence="1">Bacterial flagellum basal body</location>
    </subcellularLocation>
</comment>
<comment type="similarity">
    <text evidence="1">Belongs to the FliE family.</text>
</comment>
<gene>
    <name evidence="1" type="primary">fliE</name>
    <name type="ordered locus">TDE_1214</name>
</gene>
<reference key="1">
    <citation type="journal article" date="1997" name="Infect. Immun.">
        <title>Genetic and transcriptional analysis of flgB flagellar operon constituents in the oral spirochete Treponema denticola and their heterologous expression in enteric bacteria.</title>
        <authorList>
            <person name="Heinzerling H.F."/>
            <person name="Olivares M."/>
            <person name="Burne R.A."/>
        </authorList>
    </citation>
    <scope>NUCLEOTIDE SEQUENCE [GENOMIC DNA]</scope>
    <source>
        <strain>ATCC 35405 / DSM 14222 / CIP 103919 / JCM 8153 / KCTC 15104</strain>
    </source>
</reference>
<reference key="2">
    <citation type="journal article" date="2004" name="Proc. Natl. Acad. Sci. U.S.A.">
        <title>Comparison of the genome of the oral pathogen Treponema denticola with other spirochete genomes.</title>
        <authorList>
            <person name="Seshadri R."/>
            <person name="Myers G.S.A."/>
            <person name="Tettelin H."/>
            <person name="Eisen J.A."/>
            <person name="Heidelberg J.F."/>
            <person name="Dodson R.J."/>
            <person name="Davidsen T.M."/>
            <person name="DeBoy R.T."/>
            <person name="Fouts D.E."/>
            <person name="Haft D.H."/>
            <person name="Selengut J."/>
            <person name="Ren Q."/>
            <person name="Brinkac L.M."/>
            <person name="Madupu R."/>
            <person name="Kolonay J.F."/>
            <person name="Durkin S.A."/>
            <person name="Daugherty S.C."/>
            <person name="Shetty J."/>
            <person name="Shvartsbeyn A."/>
            <person name="Gebregeorgis E."/>
            <person name="Geer K."/>
            <person name="Tsegaye G."/>
            <person name="Malek J.A."/>
            <person name="Ayodeji B."/>
            <person name="Shatsman S."/>
            <person name="McLeod M.P."/>
            <person name="Smajs D."/>
            <person name="Howell J.K."/>
            <person name="Pal S."/>
            <person name="Amin A."/>
            <person name="Vashisth P."/>
            <person name="McNeill T.Z."/>
            <person name="Xiang Q."/>
            <person name="Sodergren E."/>
            <person name="Baca E."/>
            <person name="Weinstock G.M."/>
            <person name="Norris S.J."/>
            <person name="Fraser C.M."/>
            <person name="Paulsen I.T."/>
        </authorList>
    </citation>
    <scope>NUCLEOTIDE SEQUENCE [LARGE SCALE GENOMIC DNA]</scope>
    <source>
        <strain>ATCC 35405 / DSM 14222 / CIP 103919 / JCM 8153 / KCTC 15104</strain>
    </source>
</reference>
<keyword id="KW-0975">Bacterial flagellum</keyword>
<keyword id="KW-1185">Reference proteome</keyword>
<protein>
    <recommendedName>
        <fullName evidence="1">Flagellar hook-basal body complex protein FliE</fullName>
    </recommendedName>
</protein>
<feature type="chain" id="PRO_0000105568" description="Flagellar hook-basal body complex protein FliE">
    <location>
        <begin position="1"/>
        <end position="121"/>
    </location>
</feature>
<organism>
    <name type="scientific">Treponema denticola (strain ATCC 35405 / DSM 14222 / CIP 103919 / JCM 8153 / KCTC 15104)</name>
    <dbReference type="NCBI Taxonomy" id="243275"/>
    <lineage>
        <taxon>Bacteria</taxon>
        <taxon>Pseudomonadati</taxon>
        <taxon>Spirochaetota</taxon>
        <taxon>Spirochaetia</taxon>
        <taxon>Spirochaetales</taxon>
        <taxon>Treponemataceae</taxon>
        <taxon>Treponema</taxon>
    </lineage>
</organism>
<accession>O06679</accession>
<sequence length="121" mass="13239">MVNAVNVANVNSVPGLLDVPKINAVVTDNFRAKMVSNTDMIELAANKEAASFEQTILKAFDSMNAKQTNMDKLGEQMIVDPESVDVHDITMGMAEASLSLKLAQTIIDRLVKTWNDITTTR</sequence>
<name>FLIE_TREDE</name>
<proteinExistence type="inferred from homology"/>
<dbReference type="EMBL" id="U78776">
    <property type="protein sequence ID" value="AAB57898.1"/>
    <property type="molecule type" value="Genomic_DNA"/>
</dbReference>
<dbReference type="EMBL" id="AE017226">
    <property type="protein sequence ID" value="AAS11732.1"/>
    <property type="molecule type" value="Genomic_DNA"/>
</dbReference>
<dbReference type="RefSeq" id="NP_971821.1">
    <property type="nucleotide sequence ID" value="NC_002967.9"/>
</dbReference>
<dbReference type="RefSeq" id="WP_002671660.1">
    <property type="nucleotide sequence ID" value="NC_002967.9"/>
</dbReference>
<dbReference type="SMR" id="O06679"/>
<dbReference type="STRING" id="243275.TDE_1214"/>
<dbReference type="PaxDb" id="243275-TDE_1214"/>
<dbReference type="GeneID" id="2740108"/>
<dbReference type="KEGG" id="tde:TDE_1214"/>
<dbReference type="PATRIC" id="fig|243275.7.peg.1169"/>
<dbReference type="eggNOG" id="COG1677">
    <property type="taxonomic scope" value="Bacteria"/>
</dbReference>
<dbReference type="HOGENOM" id="CLU_147249_4_1_12"/>
<dbReference type="OrthoDB" id="370409at2"/>
<dbReference type="Proteomes" id="UP000008212">
    <property type="component" value="Chromosome"/>
</dbReference>
<dbReference type="GO" id="GO:0009425">
    <property type="term" value="C:bacterial-type flagellum basal body"/>
    <property type="evidence" value="ECO:0007669"/>
    <property type="project" value="UniProtKB-SubCell"/>
</dbReference>
<dbReference type="GO" id="GO:0003774">
    <property type="term" value="F:cytoskeletal motor activity"/>
    <property type="evidence" value="ECO:0007669"/>
    <property type="project" value="InterPro"/>
</dbReference>
<dbReference type="GO" id="GO:0005198">
    <property type="term" value="F:structural molecule activity"/>
    <property type="evidence" value="ECO:0007669"/>
    <property type="project" value="InterPro"/>
</dbReference>
<dbReference type="GO" id="GO:0071973">
    <property type="term" value="P:bacterial-type flagellum-dependent cell motility"/>
    <property type="evidence" value="ECO:0007669"/>
    <property type="project" value="InterPro"/>
</dbReference>
<dbReference type="HAMAP" id="MF_00724">
    <property type="entry name" value="FliE"/>
    <property type="match status" value="1"/>
</dbReference>
<dbReference type="InterPro" id="IPR001624">
    <property type="entry name" value="FliE"/>
</dbReference>
<dbReference type="NCBIfam" id="TIGR00205">
    <property type="entry name" value="fliE"/>
    <property type="match status" value="1"/>
</dbReference>
<dbReference type="Pfam" id="PF02049">
    <property type="entry name" value="FliE"/>
    <property type="match status" value="1"/>
</dbReference>
<dbReference type="PRINTS" id="PR01006">
    <property type="entry name" value="FLGHOOKFLIE"/>
</dbReference>
<evidence type="ECO:0000255" key="1">
    <source>
        <dbReference type="HAMAP-Rule" id="MF_00724"/>
    </source>
</evidence>